<gene>
    <name evidence="1" type="primary">cbpA</name>
    <name type="ordered locus">COXBURSA331_A1271</name>
</gene>
<keyword id="KW-0143">Chaperone</keyword>
<keyword id="KW-0963">Cytoplasm</keyword>
<keyword id="KW-0238">DNA-binding</keyword>
<sequence length="313" mass="34935">MEYQDYYKILGVSRDATADEIKKSYRKLARKYHPDVSSEPNAEEKFKQVKEAYEVLKDVEKRKAYDAIGSGWKQGQGFTPPPGWESRPGGEGVRPEFREGFSDFFESLFGGLGQEARWTRQEFKQRGQDQHSRVTVSLEEAFNGSTRLLTLQEPIVDYQTGQVTSKTRQLRIKIPAGVTEGQQIRLQGQGLPGIGGAPNGDLYLEIHLAPHSLFTVEGKDVYLNLPVTPWEAALGAKVSIPTLGGSVDLTLPPGSQTGQKLRLKGRGLPGGTPGDQYVLIKIYIPEPKNDQQKELYQQMAEQMPFDPRKELLG</sequence>
<dbReference type="EMBL" id="CP000890">
    <property type="protein sequence ID" value="ABX77619.1"/>
    <property type="molecule type" value="Genomic_DNA"/>
</dbReference>
<dbReference type="RefSeq" id="WP_012220518.1">
    <property type="nucleotide sequence ID" value="NC_010117.1"/>
</dbReference>
<dbReference type="SMR" id="A9NDK6"/>
<dbReference type="KEGG" id="cbs:COXBURSA331_A1271"/>
<dbReference type="HOGENOM" id="CLU_017633_0_0_6"/>
<dbReference type="GO" id="GO:0005737">
    <property type="term" value="C:cytoplasm"/>
    <property type="evidence" value="ECO:0007669"/>
    <property type="project" value="UniProtKB-UniRule"/>
</dbReference>
<dbReference type="GO" id="GO:0009295">
    <property type="term" value="C:nucleoid"/>
    <property type="evidence" value="ECO:0007669"/>
    <property type="project" value="UniProtKB-SubCell"/>
</dbReference>
<dbReference type="GO" id="GO:0003681">
    <property type="term" value="F:bent DNA binding"/>
    <property type="evidence" value="ECO:0007669"/>
    <property type="project" value="UniProtKB-UniRule"/>
</dbReference>
<dbReference type="GO" id="GO:0051082">
    <property type="term" value="F:unfolded protein binding"/>
    <property type="evidence" value="ECO:0007669"/>
    <property type="project" value="InterPro"/>
</dbReference>
<dbReference type="GO" id="GO:0051085">
    <property type="term" value="P:chaperone cofactor-dependent protein refolding"/>
    <property type="evidence" value="ECO:0007669"/>
    <property type="project" value="TreeGrafter"/>
</dbReference>
<dbReference type="GO" id="GO:0042026">
    <property type="term" value="P:protein refolding"/>
    <property type="evidence" value="ECO:0007669"/>
    <property type="project" value="TreeGrafter"/>
</dbReference>
<dbReference type="CDD" id="cd06257">
    <property type="entry name" value="DnaJ"/>
    <property type="match status" value="1"/>
</dbReference>
<dbReference type="CDD" id="cd10747">
    <property type="entry name" value="DnaJ_C"/>
    <property type="match status" value="1"/>
</dbReference>
<dbReference type="FunFam" id="1.10.287.110:FF:000135">
    <property type="entry name" value="Curved DNA binding protein"/>
    <property type="match status" value="1"/>
</dbReference>
<dbReference type="FunFam" id="2.60.260.20:FF:000008">
    <property type="entry name" value="Curved DNA-binding protein"/>
    <property type="match status" value="1"/>
</dbReference>
<dbReference type="FunFam" id="2.60.260.20:FF:000013">
    <property type="entry name" value="DnaJ subfamily B member 11"/>
    <property type="match status" value="1"/>
</dbReference>
<dbReference type="Gene3D" id="1.10.287.110">
    <property type="entry name" value="DnaJ domain"/>
    <property type="match status" value="1"/>
</dbReference>
<dbReference type="Gene3D" id="2.60.260.20">
    <property type="entry name" value="Urease metallochaperone UreE, N-terminal domain"/>
    <property type="match status" value="2"/>
</dbReference>
<dbReference type="HAMAP" id="MF_01154">
    <property type="entry name" value="CbpA"/>
    <property type="match status" value="1"/>
</dbReference>
<dbReference type="InterPro" id="IPR023859">
    <property type="entry name" value="DNA-bd_curved-DNA"/>
</dbReference>
<dbReference type="InterPro" id="IPR002939">
    <property type="entry name" value="DnaJ_C"/>
</dbReference>
<dbReference type="InterPro" id="IPR001623">
    <property type="entry name" value="DnaJ_domain"/>
</dbReference>
<dbReference type="InterPro" id="IPR018253">
    <property type="entry name" value="DnaJ_domain_CS"/>
</dbReference>
<dbReference type="InterPro" id="IPR008971">
    <property type="entry name" value="HSP40/DnaJ_pept-bd"/>
</dbReference>
<dbReference type="InterPro" id="IPR036869">
    <property type="entry name" value="J_dom_sf"/>
</dbReference>
<dbReference type="PANTHER" id="PTHR43096">
    <property type="entry name" value="DNAJ HOMOLOG 1, MITOCHONDRIAL-RELATED"/>
    <property type="match status" value="1"/>
</dbReference>
<dbReference type="PANTHER" id="PTHR43096:SF52">
    <property type="entry name" value="DNAJ HOMOLOG 1, MITOCHONDRIAL-RELATED"/>
    <property type="match status" value="1"/>
</dbReference>
<dbReference type="Pfam" id="PF00226">
    <property type="entry name" value="DnaJ"/>
    <property type="match status" value="1"/>
</dbReference>
<dbReference type="Pfam" id="PF01556">
    <property type="entry name" value="DnaJ_C"/>
    <property type="match status" value="1"/>
</dbReference>
<dbReference type="PRINTS" id="PR00625">
    <property type="entry name" value="JDOMAIN"/>
</dbReference>
<dbReference type="SMART" id="SM00271">
    <property type="entry name" value="DnaJ"/>
    <property type="match status" value="1"/>
</dbReference>
<dbReference type="SUPFAM" id="SSF46565">
    <property type="entry name" value="Chaperone J-domain"/>
    <property type="match status" value="1"/>
</dbReference>
<dbReference type="SUPFAM" id="SSF49493">
    <property type="entry name" value="HSP40/DnaJ peptide-binding domain"/>
    <property type="match status" value="2"/>
</dbReference>
<dbReference type="PROSITE" id="PS00636">
    <property type="entry name" value="DNAJ_1"/>
    <property type="match status" value="1"/>
</dbReference>
<dbReference type="PROSITE" id="PS50076">
    <property type="entry name" value="DNAJ_2"/>
    <property type="match status" value="1"/>
</dbReference>
<proteinExistence type="inferred from homology"/>
<feature type="chain" id="PRO_1000085338" description="Curved DNA-binding protein">
    <location>
        <begin position="1"/>
        <end position="313"/>
    </location>
</feature>
<feature type="domain" description="J" evidence="1">
    <location>
        <begin position="5"/>
        <end position="69"/>
    </location>
</feature>
<feature type="region of interest" description="Disordered" evidence="2">
    <location>
        <begin position="71"/>
        <end position="93"/>
    </location>
</feature>
<name>CBPA_COXBR</name>
<organism>
    <name type="scientific">Coxiella burnetii (strain RSA 331 / Henzerling II)</name>
    <dbReference type="NCBI Taxonomy" id="360115"/>
    <lineage>
        <taxon>Bacteria</taxon>
        <taxon>Pseudomonadati</taxon>
        <taxon>Pseudomonadota</taxon>
        <taxon>Gammaproteobacteria</taxon>
        <taxon>Legionellales</taxon>
        <taxon>Coxiellaceae</taxon>
        <taxon>Coxiella</taxon>
    </lineage>
</organism>
<evidence type="ECO:0000255" key="1">
    <source>
        <dbReference type="HAMAP-Rule" id="MF_01154"/>
    </source>
</evidence>
<evidence type="ECO:0000256" key="2">
    <source>
        <dbReference type="SAM" id="MobiDB-lite"/>
    </source>
</evidence>
<comment type="function">
    <text evidence="1">DNA-binding protein that preferentially recognizes a curved DNA sequence. It is probably a functional analog of DnaJ; displays overlapping activities with DnaJ, but functions under different conditions, probably acting as a molecular chaperone in an adaptive response to environmental stresses other than heat shock. Lacks autonomous chaperone activity; binds native substrates and targets them for recognition by DnaK. Its activity is inhibited by the binding of CbpM.</text>
</comment>
<comment type="subcellular location">
    <subcellularLocation>
        <location evidence="1">Cytoplasm</location>
        <location evidence="1">Nucleoid</location>
    </subcellularLocation>
</comment>
<accession>A9NDK6</accession>
<protein>
    <recommendedName>
        <fullName evidence="1">Curved DNA-binding protein</fullName>
    </recommendedName>
</protein>
<reference key="1">
    <citation type="submission" date="2007-11" db="EMBL/GenBank/DDBJ databases">
        <title>Genome sequencing of phylogenetically and phenotypically diverse Coxiella burnetii isolates.</title>
        <authorList>
            <person name="Seshadri R."/>
            <person name="Samuel J.E."/>
        </authorList>
    </citation>
    <scope>NUCLEOTIDE SEQUENCE [LARGE SCALE GENOMIC DNA]</scope>
    <source>
        <strain>RSA 331 / Henzerling II</strain>
    </source>
</reference>